<protein>
    <recommendedName>
        <fullName evidence="3">Gigasin-5</fullName>
    </recommendedName>
</protein>
<keyword id="KW-0903">Direct protein sequencing</keyword>
<keyword id="KW-1185">Reference proteome</keyword>
<name>GIGA5_MAGGI</name>
<dbReference type="EMBL" id="FP002158">
    <property type="status" value="NOT_ANNOTATED_CDS"/>
    <property type="molecule type" value="mRNA"/>
</dbReference>
<dbReference type="InParanoid" id="P86788"/>
<dbReference type="Proteomes" id="UP000005408">
    <property type="component" value="Unplaced"/>
</dbReference>
<reference evidence="4" key="1">
    <citation type="journal article" date="2009" name="BMC Genomics">
        <title>Generation and analysis of a 29,745 unique Expressed Sequence Tags from the Pacific oyster (Crassostrea gigas) assembled into a publicly accessible database: the GigasDatabase.</title>
        <authorList>
            <person name="Fleury E."/>
            <person name="Huvet A."/>
            <person name="Lelong C."/>
            <person name="de Lorgeril J."/>
            <person name="Boulo V."/>
            <person name="Gueguen Y."/>
            <person name="Bachere E."/>
            <person name="Tanguy A."/>
            <person name="Moraga D."/>
            <person name="Fabioux C."/>
            <person name="Lindeque P."/>
            <person name="Shaw J."/>
            <person name="Reinhardt R."/>
            <person name="Prunet P."/>
            <person name="Davey G."/>
            <person name="Lapegue S."/>
            <person name="Sauvage C."/>
            <person name="Corporeau C."/>
            <person name="Moal J."/>
            <person name="Gavory F."/>
            <person name="Wincker P."/>
            <person name="Moreews F."/>
            <person name="Klopp C."/>
            <person name="Mathieu M."/>
            <person name="Boudry P."/>
            <person name="Favrel P."/>
        </authorList>
    </citation>
    <scope>NUCLEOTIDE SEQUENCE [MRNA]</scope>
    <source>
        <tissue evidence="1">Hemocyte</tissue>
    </source>
</reference>
<reference evidence="4" key="2">
    <citation type="journal article" date="2010" name="FEBS Lett.">
        <title>Proteomic identification of novel proteins from the calcifying shell matrix of the Pacific oyster Crassostrea gigas.</title>
        <authorList>
            <person name="Marie B."/>
            <person name="Zanella-Cleon I."/>
            <person name="Becchi M."/>
            <person name="Marin F."/>
        </authorList>
    </citation>
    <scope>PROTEIN SEQUENCE OF 78-90 AND 95-101</scope>
    <scope>TISSUE SPECIFICITY</scope>
    <source>
        <tissue evidence="2">Shell</tissue>
    </source>
</reference>
<organism>
    <name type="scientific">Magallana gigas</name>
    <name type="common">Pacific oyster</name>
    <name type="synonym">Crassostrea gigas</name>
    <dbReference type="NCBI Taxonomy" id="29159"/>
    <lineage>
        <taxon>Eukaryota</taxon>
        <taxon>Metazoa</taxon>
        <taxon>Spiralia</taxon>
        <taxon>Lophotrochozoa</taxon>
        <taxon>Mollusca</taxon>
        <taxon>Bivalvia</taxon>
        <taxon>Autobranchia</taxon>
        <taxon>Pteriomorphia</taxon>
        <taxon>Ostreida</taxon>
        <taxon>Ostreoidea</taxon>
        <taxon>Ostreidae</taxon>
        <taxon>Magallana</taxon>
    </lineage>
</organism>
<accession>P86788</accession>
<feature type="chain" id="PRO_0000403310" description="Gigasin-5">
    <location>
        <begin position="1" status="less than"/>
        <end position="113"/>
    </location>
</feature>
<feature type="non-terminal residue" evidence="4">
    <location>
        <position position="1"/>
    </location>
</feature>
<sequence>GGPGCGNGNNGNGNYGYGNGNGNGNGYGNSNGNGNGCGPDGKGPGCNSVSSAGTLSSYGQVVGSNVYSANGCGPDGKGPGCQVKPLSLPKYFFRKSSQYPRRKNCSPNEIGCN</sequence>
<proteinExistence type="evidence at protein level"/>
<evidence type="ECO:0000269" key="1">
    <source>
    </source>
</evidence>
<evidence type="ECO:0000269" key="2">
    <source ref="2"/>
</evidence>
<evidence type="ECO:0000303" key="3">
    <source ref="2"/>
</evidence>
<evidence type="ECO:0000305" key="4"/>
<comment type="tissue specificity">
    <text evidence="2">Component of the organic matrix of calcified shell layers.</text>
</comment>